<sequence>MKKLKINYLFIGILALLLAVALWPSIPWFGKADNRIAAIQARGELRVSTIHTPLTYNEINGKPFGLDYELAKQFADYLGVKLKVTVRQNISQLFDDLDNGNADLLAAGLVYNSERVKNYQPGPTYYSVSQQLVYKVGQYRPRTLGNLTAEQLTVAPGHVVVNDLQTLKETKFPELSWKVDDKKGSAELMEDVIEGKLDYTIADSVAISLFQRVHPELAVALDITDEQPVTWFSPLDGDNTLSAALLDFFNEMNEDGTLARIEEKYLGHGDDFDYVDTRTFLRAVDAVLPQLKPLFEKYAEEIDWRLLAAIAYQESHWDAQATSPTGVRGMMMLTKNTAQSLGITDRTDAEQSISGGVRYLQDMMSKVPESVPENERIWFALAAYNMGYAHMLDARALTAKTKGNPDSWADVKQRLPLLSQKPYYSKLTYGYARGHEAYAYVENIRKYQISLVGYLQEKEKQATEAAMQLAQDYPAVSPTELGKEKFPFLSFLSQSSSNYLTHSPSLLFSRKGSEEKQN</sequence>
<name>MLTF_SHIFL</name>
<reference key="1">
    <citation type="journal article" date="2002" name="Nucleic Acids Res.">
        <title>Genome sequence of Shigella flexneri 2a: insights into pathogenicity through comparison with genomes of Escherichia coli K12 and O157.</title>
        <authorList>
            <person name="Jin Q."/>
            <person name="Yuan Z."/>
            <person name="Xu J."/>
            <person name="Wang Y."/>
            <person name="Shen Y."/>
            <person name="Lu W."/>
            <person name="Wang J."/>
            <person name="Liu H."/>
            <person name="Yang J."/>
            <person name="Yang F."/>
            <person name="Zhang X."/>
            <person name="Zhang J."/>
            <person name="Yang G."/>
            <person name="Wu H."/>
            <person name="Qu D."/>
            <person name="Dong J."/>
            <person name="Sun L."/>
            <person name="Xue Y."/>
            <person name="Zhao A."/>
            <person name="Gao Y."/>
            <person name="Zhu J."/>
            <person name="Kan B."/>
            <person name="Ding K."/>
            <person name="Chen S."/>
            <person name="Cheng H."/>
            <person name="Yao Z."/>
            <person name="He B."/>
            <person name="Chen R."/>
            <person name="Ma D."/>
            <person name="Qiang B."/>
            <person name="Wen Y."/>
            <person name="Hou Y."/>
            <person name="Yu J."/>
        </authorList>
    </citation>
    <scope>NUCLEOTIDE SEQUENCE [LARGE SCALE GENOMIC DNA]</scope>
    <source>
        <strain>301 / Serotype 2a</strain>
    </source>
</reference>
<reference key="2">
    <citation type="journal article" date="2003" name="Infect. Immun.">
        <title>Complete genome sequence and comparative genomics of Shigella flexneri serotype 2a strain 2457T.</title>
        <authorList>
            <person name="Wei J."/>
            <person name="Goldberg M.B."/>
            <person name="Burland V."/>
            <person name="Venkatesan M.M."/>
            <person name="Deng W."/>
            <person name="Fournier G."/>
            <person name="Mayhew G.F."/>
            <person name="Plunkett G. III"/>
            <person name="Rose D.J."/>
            <person name="Darling A."/>
            <person name="Mau B."/>
            <person name="Perna N.T."/>
            <person name="Payne S.M."/>
            <person name="Runyen-Janecky L.J."/>
            <person name="Zhou S."/>
            <person name="Schwartz D.C."/>
            <person name="Blattner F.R."/>
        </authorList>
    </citation>
    <scope>NUCLEOTIDE SEQUENCE [LARGE SCALE GENOMIC DNA]</scope>
    <source>
        <strain>ATCC 700930 / 2457T / Serotype 2a</strain>
    </source>
</reference>
<organism>
    <name type="scientific">Shigella flexneri</name>
    <dbReference type="NCBI Taxonomy" id="623"/>
    <lineage>
        <taxon>Bacteria</taxon>
        <taxon>Pseudomonadati</taxon>
        <taxon>Pseudomonadota</taxon>
        <taxon>Gammaproteobacteria</taxon>
        <taxon>Enterobacterales</taxon>
        <taxon>Enterobacteriaceae</taxon>
        <taxon>Shigella</taxon>
    </lineage>
</organism>
<gene>
    <name evidence="1" type="primary">mltF</name>
    <name type="synonym">yfhD</name>
    <name type="ordered locus">SF2605</name>
    <name type="ordered locus">S2777</name>
</gene>
<proteinExistence type="inferred from homology"/>
<keyword id="KW-0998">Cell outer membrane</keyword>
<keyword id="KW-0961">Cell wall biogenesis/degradation</keyword>
<keyword id="KW-0456">Lyase</keyword>
<keyword id="KW-0472">Membrane</keyword>
<keyword id="KW-1185">Reference proteome</keyword>
<keyword id="KW-0732">Signal</keyword>
<comment type="function">
    <text evidence="1">Murein-degrading enzyme that degrades murein glycan strands and insoluble, high-molecular weight murein sacculi, with the concomitant formation of a 1,6-anhydromuramoyl product. Lytic transglycosylases (LTs) play an integral role in the metabolism of the peptidoglycan (PG) sacculus. Their lytic action creates space within the PG sacculus to allow for its expansion as well as for the insertion of various structures such as secretion systems and flagella.</text>
</comment>
<comment type="catalytic activity">
    <reaction evidence="1">
        <text>Exolytic cleavage of the (1-&gt;4)-beta-glycosidic linkage between N-acetylmuramic acid (MurNAc) and N-acetylglucosamine (GlcNAc) residues in peptidoglycan, from either the reducing or the non-reducing ends of the peptidoglycan chains, with concomitant formation of a 1,6-anhydrobond in the MurNAc residue.</text>
        <dbReference type="EC" id="4.2.2.n1"/>
    </reaction>
</comment>
<comment type="subcellular location">
    <subcellularLocation>
        <location>Cell outer membrane</location>
        <topology>Peripheral membrane protein</topology>
    </subcellularLocation>
    <text evidence="1">Attached to the inner leaflet of the outer membrane.</text>
</comment>
<comment type="domain">
    <text evidence="1">The N-terminal domain does not have lytic activity and probably modulates enzymatic activity. The C-terminal domain is the catalytic active domain.</text>
</comment>
<comment type="similarity">
    <text evidence="1">In the N-terminal section; belongs to the bacterial solute-binding protein 3 family.</text>
</comment>
<comment type="similarity">
    <text evidence="1">In the C-terminal section; belongs to the transglycosylase Slt family.</text>
</comment>
<comment type="sequence caution" evidence="2">
    <conflict type="erroneous initiation">
        <sequence resource="EMBL-CDS" id="AAN44102"/>
    </conflict>
</comment>
<comment type="sequence caution" evidence="2">
    <conflict type="erroneous initiation">
        <sequence resource="EMBL-CDS" id="AAP17926"/>
    </conflict>
</comment>
<protein>
    <recommendedName>
        <fullName evidence="1">Membrane-bound lytic murein transglycosylase F</fullName>
        <ecNumber evidence="1">4.2.2.n1</ecNumber>
    </recommendedName>
    <alternativeName>
        <fullName evidence="1">Murein lyase F</fullName>
    </alternativeName>
</protein>
<evidence type="ECO:0000255" key="1">
    <source>
        <dbReference type="HAMAP-Rule" id="MF_02016"/>
    </source>
</evidence>
<evidence type="ECO:0000305" key="2"/>
<accession>P0AGC6</accession>
<accession>P30135</accession>
<accession>Q83QJ0</accession>
<feature type="signal peptide" evidence="1">
    <location>
        <begin position="1"/>
        <end position="21"/>
    </location>
</feature>
<feature type="chain" id="PRO_0000196563" description="Membrane-bound lytic murein transglycosylase F">
    <location>
        <begin position="22"/>
        <end position="518"/>
    </location>
</feature>
<feature type="region of interest" description="Non-LT domain" evidence="1">
    <location>
        <begin position="22"/>
        <end position="269"/>
    </location>
</feature>
<feature type="region of interest" description="LT domain" evidence="1">
    <location>
        <begin position="270"/>
        <end position="518"/>
    </location>
</feature>
<feature type="active site" evidence="1">
    <location>
        <position position="314"/>
    </location>
</feature>
<dbReference type="EC" id="4.2.2.n1" evidence="1"/>
<dbReference type="EMBL" id="AE005674">
    <property type="protein sequence ID" value="AAN44102.2"/>
    <property type="status" value="ALT_INIT"/>
    <property type="molecule type" value="Genomic_DNA"/>
</dbReference>
<dbReference type="EMBL" id="AE014073">
    <property type="protein sequence ID" value="AAP17926.1"/>
    <property type="status" value="ALT_INIT"/>
    <property type="molecule type" value="Genomic_DNA"/>
</dbReference>
<dbReference type="RefSeq" id="NP_708395.2">
    <property type="nucleotide sequence ID" value="NC_004337.2"/>
</dbReference>
<dbReference type="RefSeq" id="WP_000734212.1">
    <property type="nucleotide sequence ID" value="NZ_WPGW01000021.1"/>
</dbReference>
<dbReference type="SMR" id="P0AGC6"/>
<dbReference type="STRING" id="198214.SF2605"/>
<dbReference type="PaxDb" id="198214-SF2605"/>
<dbReference type="GeneID" id="1025640"/>
<dbReference type="GeneID" id="75206251"/>
<dbReference type="KEGG" id="sfl:SF2605"/>
<dbReference type="KEGG" id="sfx:S2777"/>
<dbReference type="PATRIC" id="fig|198214.7.peg.3110"/>
<dbReference type="HOGENOM" id="CLU_027494_0_1_6"/>
<dbReference type="Proteomes" id="UP000001006">
    <property type="component" value="Chromosome"/>
</dbReference>
<dbReference type="Proteomes" id="UP000002673">
    <property type="component" value="Chromosome"/>
</dbReference>
<dbReference type="GO" id="GO:0009279">
    <property type="term" value="C:cell outer membrane"/>
    <property type="evidence" value="ECO:0007669"/>
    <property type="project" value="UniProtKB-SubCell"/>
</dbReference>
<dbReference type="GO" id="GO:0008933">
    <property type="term" value="F:peptidoglycan lytic transglycosylase activity"/>
    <property type="evidence" value="ECO:0007669"/>
    <property type="project" value="UniProtKB-UniRule"/>
</dbReference>
<dbReference type="GO" id="GO:0016998">
    <property type="term" value="P:cell wall macromolecule catabolic process"/>
    <property type="evidence" value="ECO:0007669"/>
    <property type="project" value="UniProtKB-UniRule"/>
</dbReference>
<dbReference type="GO" id="GO:0071555">
    <property type="term" value="P:cell wall organization"/>
    <property type="evidence" value="ECO:0007669"/>
    <property type="project" value="UniProtKB-KW"/>
</dbReference>
<dbReference type="GO" id="GO:0009253">
    <property type="term" value="P:peptidoglycan catabolic process"/>
    <property type="evidence" value="ECO:0007669"/>
    <property type="project" value="TreeGrafter"/>
</dbReference>
<dbReference type="CDD" id="cd13403">
    <property type="entry name" value="MLTF-like"/>
    <property type="match status" value="1"/>
</dbReference>
<dbReference type="CDD" id="cd01009">
    <property type="entry name" value="PBP2_YfhD_N"/>
    <property type="match status" value="1"/>
</dbReference>
<dbReference type="FunFam" id="1.10.530.10:FF:000003">
    <property type="entry name" value="Membrane-bound lytic murein transglycosylase F"/>
    <property type="match status" value="1"/>
</dbReference>
<dbReference type="FunFam" id="3.40.190.10:FF:000051">
    <property type="entry name" value="Membrane-bound lytic murein transglycosylase F"/>
    <property type="match status" value="1"/>
</dbReference>
<dbReference type="Gene3D" id="1.10.530.10">
    <property type="match status" value="1"/>
</dbReference>
<dbReference type="Gene3D" id="3.40.190.10">
    <property type="entry name" value="Periplasmic binding protein-like II"/>
    <property type="match status" value="2"/>
</dbReference>
<dbReference type="HAMAP" id="MF_02016">
    <property type="entry name" value="MltF"/>
    <property type="match status" value="1"/>
</dbReference>
<dbReference type="InterPro" id="IPR023346">
    <property type="entry name" value="Lysozyme-like_dom_sf"/>
</dbReference>
<dbReference type="InterPro" id="IPR023703">
    <property type="entry name" value="MltF"/>
</dbReference>
<dbReference type="InterPro" id="IPR001638">
    <property type="entry name" value="Solute-binding_3/MltF_N"/>
</dbReference>
<dbReference type="InterPro" id="IPR000189">
    <property type="entry name" value="Transglyc_AS"/>
</dbReference>
<dbReference type="InterPro" id="IPR008258">
    <property type="entry name" value="Transglycosylase_SLT_dom_1"/>
</dbReference>
<dbReference type="NCBIfam" id="NF008112">
    <property type="entry name" value="PRK10859.1"/>
    <property type="match status" value="1"/>
</dbReference>
<dbReference type="PANTHER" id="PTHR35936">
    <property type="entry name" value="MEMBRANE-BOUND LYTIC MUREIN TRANSGLYCOSYLASE F"/>
    <property type="match status" value="1"/>
</dbReference>
<dbReference type="PANTHER" id="PTHR35936:SF32">
    <property type="entry name" value="MEMBRANE-BOUND LYTIC MUREIN TRANSGLYCOSYLASE F"/>
    <property type="match status" value="1"/>
</dbReference>
<dbReference type="Pfam" id="PF00497">
    <property type="entry name" value="SBP_bac_3"/>
    <property type="match status" value="1"/>
</dbReference>
<dbReference type="Pfam" id="PF01464">
    <property type="entry name" value="SLT"/>
    <property type="match status" value="1"/>
</dbReference>
<dbReference type="SMART" id="SM00062">
    <property type="entry name" value="PBPb"/>
    <property type="match status" value="1"/>
</dbReference>
<dbReference type="SUPFAM" id="SSF53955">
    <property type="entry name" value="Lysozyme-like"/>
    <property type="match status" value="1"/>
</dbReference>
<dbReference type="SUPFAM" id="SSF53850">
    <property type="entry name" value="Periplasmic binding protein-like II"/>
    <property type="match status" value="1"/>
</dbReference>
<dbReference type="PROSITE" id="PS00922">
    <property type="entry name" value="TRANSGLYCOSYLASE"/>
    <property type="match status" value="1"/>
</dbReference>